<reference key="1">
    <citation type="submission" date="2004-06" db="EMBL/GenBank/DDBJ databases">
        <authorList>
            <consortium name="NIH - Xenopus Gene Collection (XGC) project"/>
        </authorList>
    </citation>
    <scope>NUCLEOTIDE SEQUENCE [LARGE SCALE MRNA]</scope>
    <source>
        <tissue>Brain</tissue>
    </source>
</reference>
<proteinExistence type="evidence at transcript level"/>
<protein>
    <recommendedName>
        <fullName evidence="2">Malonate--CoA ligase ACSF3, mitochondrial</fullName>
        <ecNumber evidence="2">6.2.1.76</ecNumber>
    </recommendedName>
    <alternativeName>
        <fullName>Acyl-CoA synthetase family member 3</fullName>
    </alternativeName>
</protein>
<gene>
    <name evidence="2" type="primary">acsf3</name>
</gene>
<comment type="function">
    <text evidence="2">Catalyzes the initial reaction in intramitochondrial fatty acid synthesis, by activating malonate and methylmalonate, but not acetate, into their respective CoA thioester. May have some preference toward very-long-chain substrates.</text>
</comment>
<comment type="catalytic activity">
    <reaction evidence="2">
        <text>tetracosanoate + ATP + CoA = tetracosanoyl-CoA + AMP + diphosphate</text>
        <dbReference type="Rhea" id="RHEA:33639"/>
        <dbReference type="ChEBI" id="CHEBI:30616"/>
        <dbReference type="ChEBI" id="CHEBI:31014"/>
        <dbReference type="ChEBI" id="CHEBI:33019"/>
        <dbReference type="ChEBI" id="CHEBI:57287"/>
        <dbReference type="ChEBI" id="CHEBI:65052"/>
        <dbReference type="ChEBI" id="CHEBI:456215"/>
    </reaction>
    <physiologicalReaction direction="left-to-right" evidence="2">
        <dbReference type="Rhea" id="RHEA:33640"/>
    </physiologicalReaction>
</comment>
<comment type="catalytic activity">
    <reaction evidence="2">
        <text>malonate + ATP + CoA = malonyl-CoA + AMP + diphosphate</text>
        <dbReference type="Rhea" id="RHEA:32139"/>
        <dbReference type="ChEBI" id="CHEBI:15792"/>
        <dbReference type="ChEBI" id="CHEBI:30616"/>
        <dbReference type="ChEBI" id="CHEBI:33019"/>
        <dbReference type="ChEBI" id="CHEBI:57287"/>
        <dbReference type="ChEBI" id="CHEBI:57384"/>
        <dbReference type="ChEBI" id="CHEBI:456215"/>
        <dbReference type="EC" id="6.2.1.76"/>
    </reaction>
    <physiologicalReaction direction="left-to-right" evidence="2">
        <dbReference type="Rhea" id="RHEA:32140"/>
    </physiologicalReaction>
</comment>
<comment type="subcellular location">
    <subcellularLocation>
        <location evidence="2">Mitochondrion</location>
    </subcellularLocation>
</comment>
<comment type="similarity">
    <text evidence="5">Belongs to the ATP-dependent AMP-binding enzyme family.</text>
</comment>
<evidence type="ECO:0000250" key="1"/>
<evidence type="ECO:0000250" key="2">
    <source>
        <dbReference type="UniProtKB" id="Q4G176"/>
    </source>
</evidence>
<evidence type="ECO:0000255" key="3"/>
<evidence type="ECO:0000256" key="4">
    <source>
        <dbReference type="SAM" id="MobiDB-lite"/>
    </source>
</evidence>
<evidence type="ECO:0000305" key="5"/>
<keyword id="KW-0067">ATP-binding</keyword>
<keyword id="KW-0276">Fatty acid metabolism</keyword>
<keyword id="KW-0436">Ligase</keyword>
<keyword id="KW-0443">Lipid metabolism</keyword>
<keyword id="KW-0496">Mitochondrion</keyword>
<keyword id="KW-0547">Nucleotide-binding</keyword>
<keyword id="KW-1185">Reference proteome</keyword>
<keyword id="KW-0809">Transit peptide</keyword>
<dbReference type="EC" id="6.2.1.76" evidence="2"/>
<dbReference type="EMBL" id="BC074473">
    <property type="protein sequence ID" value="AAH74473.1"/>
    <property type="molecule type" value="mRNA"/>
</dbReference>
<dbReference type="RefSeq" id="NP_001086314.2">
    <property type="nucleotide sequence ID" value="NM_001092845.1"/>
</dbReference>
<dbReference type="SMR" id="Q6GLK6"/>
<dbReference type="DNASU" id="444743"/>
<dbReference type="GeneID" id="444743"/>
<dbReference type="KEGG" id="xla:444743"/>
<dbReference type="AGR" id="Xenbase:XB-GENE-964816"/>
<dbReference type="CTD" id="444743"/>
<dbReference type="Xenbase" id="XB-GENE-964816">
    <property type="gene designation" value="acsf3.S"/>
</dbReference>
<dbReference type="OrthoDB" id="2962993at2759"/>
<dbReference type="Proteomes" id="UP000186698">
    <property type="component" value="Chromosome 4S"/>
</dbReference>
<dbReference type="Bgee" id="444743">
    <property type="expression patterns" value="Expressed in muscle tissue and 19 other cell types or tissues"/>
</dbReference>
<dbReference type="GO" id="GO:0005739">
    <property type="term" value="C:mitochondrion"/>
    <property type="evidence" value="ECO:0007669"/>
    <property type="project" value="UniProtKB-SubCell"/>
</dbReference>
<dbReference type="GO" id="GO:0005524">
    <property type="term" value="F:ATP binding"/>
    <property type="evidence" value="ECO:0007669"/>
    <property type="project" value="UniProtKB-KW"/>
</dbReference>
<dbReference type="GO" id="GO:0090409">
    <property type="term" value="F:malonyl-CoA synthetase activity"/>
    <property type="evidence" value="ECO:0007669"/>
    <property type="project" value="RHEA"/>
</dbReference>
<dbReference type="GO" id="GO:0031956">
    <property type="term" value="F:medium-chain fatty acid-CoA ligase activity"/>
    <property type="evidence" value="ECO:0000318"/>
    <property type="project" value="GO_Central"/>
</dbReference>
<dbReference type="GO" id="GO:0006631">
    <property type="term" value="P:fatty acid metabolic process"/>
    <property type="evidence" value="ECO:0000318"/>
    <property type="project" value="GO_Central"/>
</dbReference>
<dbReference type="CDD" id="cd05941">
    <property type="entry name" value="MCS"/>
    <property type="match status" value="1"/>
</dbReference>
<dbReference type="FunFam" id="3.30.300.30:FF:000031">
    <property type="entry name" value="Acyl-CoA synthetase family member 3"/>
    <property type="match status" value="1"/>
</dbReference>
<dbReference type="FunFam" id="3.40.50.12780:FF:000030">
    <property type="entry name" value="Acyl-CoA synthetase family member 3"/>
    <property type="match status" value="1"/>
</dbReference>
<dbReference type="Gene3D" id="3.30.300.30">
    <property type="match status" value="1"/>
</dbReference>
<dbReference type="Gene3D" id="3.40.50.12780">
    <property type="entry name" value="N-terminal domain of ligase-like"/>
    <property type="match status" value="1"/>
</dbReference>
<dbReference type="InterPro" id="IPR025110">
    <property type="entry name" value="AMP-bd_C"/>
</dbReference>
<dbReference type="InterPro" id="IPR045851">
    <property type="entry name" value="AMP-bd_C_sf"/>
</dbReference>
<dbReference type="InterPro" id="IPR020845">
    <property type="entry name" value="AMP-binding_CS"/>
</dbReference>
<dbReference type="InterPro" id="IPR000873">
    <property type="entry name" value="AMP-dep_synth/lig_dom"/>
</dbReference>
<dbReference type="InterPro" id="IPR042099">
    <property type="entry name" value="ANL_N_sf"/>
</dbReference>
<dbReference type="PANTHER" id="PTHR43201">
    <property type="entry name" value="ACYL-COA SYNTHETASE"/>
    <property type="match status" value="1"/>
</dbReference>
<dbReference type="PANTHER" id="PTHR43201:SF8">
    <property type="entry name" value="ACYL-COA SYNTHETASE FAMILY MEMBER 3"/>
    <property type="match status" value="1"/>
</dbReference>
<dbReference type="Pfam" id="PF00501">
    <property type="entry name" value="AMP-binding"/>
    <property type="match status" value="1"/>
</dbReference>
<dbReference type="Pfam" id="PF13193">
    <property type="entry name" value="AMP-binding_C"/>
    <property type="match status" value="1"/>
</dbReference>
<dbReference type="SUPFAM" id="SSF56801">
    <property type="entry name" value="Acetyl-CoA synthetase-like"/>
    <property type="match status" value="1"/>
</dbReference>
<dbReference type="PROSITE" id="PS00455">
    <property type="entry name" value="AMP_BINDING"/>
    <property type="match status" value="1"/>
</dbReference>
<name>ACSF3_XENLA</name>
<feature type="transit peptide" description="Mitochondrion" evidence="3">
    <location>
        <begin position="1"/>
        <end position="19"/>
    </location>
</feature>
<feature type="chain" id="PRO_0000315802" description="Malonate--CoA ligase ACSF3, mitochondrial">
    <location>
        <begin position="20"/>
        <end position="578"/>
    </location>
</feature>
<feature type="region of interest" description="Disordered" evidence="4">
    <location>
        <begin position="394"/>
        <end position="413"/>
    </location>
</feature>
<feature type="binding site" evidence="1">
    <location>
        <begin position="205"/>
        <end position="213"/>
    </location>
    <ligand>
        <name>ATP</name>
        <dbReference type="ChEBI" id="CHEBI:30616"/>
    </ligand>
</feature>
<feature type="binding site" evidence="1">
    <location>
        <position position="459"/>
    </location>
    <ligand>
        <name>ATP</name>
        <dbReference type="ChEBI" id="CHEBI:30616"/>
    </ligand>
</feature>
<feature type="binding site" evidence="1">
    <location>
        <position position="473"/>
    </location>
    <ligand>
        <name>ATP</name>
        <dbReference type="ChEBI" id="CHEBI:30616"/>
    </ligand>
</feature>
<feature type="binding site" evidence="1">
    <location>
        <position position="565"/>
    </location>
    <ligand>
        <name>ATP</name>
        <dbReference type="ChEBI" id="CHEBI:30616"/>
    </ligand>
</feature>
<organism>
    <name type="scientific">Xenopus laevis</name>
    <name type="common">African clawed frog</name>
    <dbReference type="NCBI Taxonomy" id="8355"/>
    <lineage>
        <taxon>Eukaryota</taxon>
        <taxon>Metazoa</taxon>
        <taxon>Chordata</taxon>
        <taxon>Craniata</taxon>
        <taxon>Vertebrata</taxon>
        <taxon>Euteleostomi</taxon>
        <taxon>Amphibia</taxon>
        <taxon>Batrachia</taxon>
        <taxon>Anura</taxon>
        <taxon>Pipoidea</taxon>
        <taxon>Pipidae</taxon>
        <taxon>Xenopodinae</taxon>
        <taxon>Xenopus</taxon>
        <taxon>Xenopus</taxon>
    </lineage>
</organism>
<sequence>MRVGAFLGRSLFSCSHVRGALVRRRTPQHSCSFHISKPRSLSHVVPVFSRAPLFSERTAMVDQHGKHTYKDLYIRSQALSKMIIQLLGNPSHNNTPERVSFLCPNNSSYVVCQWAVWMSGAIAVPLCKSHPPSELKYVLQDSQSALVVAEESYTNVLSPLAEQLGIPVLTMSGSQNLHPSELLQEIKISQLDLDWKDRGAMIIYTSGTTGRPKGVLSTHYNLYSMVTALVNEWGWTKEDSILHVLPLHHVHGVVNKLMCPLWVGATCVILPEFCPKTVWQHFLGRDVPSINIFMAVPTIYSKLIAYYEQHFTHSNVREFVRAACQERIRLMVSGSSALPVPVLERWQEITGHTLLERYGMTEIGMALTNPLHGPRVPGAVGAPLPGVEVRTVTQNPRKEGTSYTTHAQGDSTGTMVSVGLENREGELQVRGPAVFKEYWNKRLDTQEAFTSDGWFKTGDTAMYKDGTYWILGRTSVDIIKSGGYKVSALEVERHLLGHPSITDVAVIGAPDVTWGQRVAAIVKLRDGHALSLQELKEWARAVMAPYCIPAELIRVEEIPRNQMGKINKKQLLVHFYPQ</sequence>
<accession>Q6GLK6</accession>